<protein>
    <recommendedName>
        <fullName>2''-aminoglycoside nucleotidyltransferase</fullName>
        <ecNumber>2.7.7.46</ecNumber>
    </recommendedName>
    <alternativeName>
        <fullName>AAD(2'')</fullName>
    </alternativeName>
    <alternativeName>
        <fullName>Gentamicin 2''-nucleotidyltransferase</fullName>
    </alternativeName>
    <alternativeName>
        <fullName>Gentamicin resistance protein</fullName>
    </alternativeName>
</protein>
<geneLocation type="plasmid">
    <name>pDGO100</name>
</geneLocation>
<geneLocation type="plasmid">
    <name>IncQ pIE723</name>
</geneLocation>
<comment type="function">
    <text evidence="1">Mediates bacterial resistance to kanamycin, gentamicin and tobramycin by adenylating the 2''-hydroxyl group of these antibiotics.</text>
</comment>
<comment type="catalytic activity">
    <reaction evidence="1">
        <text>nucleoside triphosphate + gentamicin = diphosphate + 2''-nucleotidylgentamicin.</text>
        <dbReference type="EC" id="2.7.7.46"/>
    </reaction>
</comment>
<comment type="cofactor">
    <cofactor evidence="1">
        <name>Mg(2+)</name>
        <dbReference type="ChEBI" id="CHEBI:18420"/>
    </cofactor>
    <text evidence="1">Binds 2 Mg(2+).</text>
</comment>
<comment type="sequence caution" evidence="2">
    <conflict type="erroneous initiation">
        <sequence resource="EMBL-CDS" id="CAA28209"/>
    </conflict>
    <text>Truncated N-terminus.</text>
</comment>
<reference key="1">
    <citation type="journal article" date="1986" name="Nucleic Acids Res.">
        <title>Nucleotide sequence of the AAD(2'') aminoglycoside adenylyltransferase determinant aadB. Evolutionary relationship of this region with those surrounding aadA in R538-1 and dhfrII in R388.</title>
        <authorList>
            <person name="Cameron F.H."/>
            <person name="Groot Obbink D.J."/>
            <person name="Ackerman V.P."/>
            <person name="Hall R.M."/>
        </authorList>
    </citation>
    <scope>NUCLEOTIDE SEQUENCE [GENOMIC DNA]</scope>
    <source>
        <plasmid>pDGO100</plasmid>
    </source>
</reference>
<reference key="2">
    <citation type="submission" date="1995-01" db="EMBL/GenBank/DDBJ databases">
        <title>Nucleotide sequence and expression of a gentamicin resistance gene cassette from the IncQ plasmid pIE723.</title>
        <authorList>
            <person name="Tietze E."/>
        </authorList>
    </citation>
    <scope>NUCLEOTIDE SEQUENCE [GENOMIC DNA]</scope>
    <source>
        <strain>O147:K88 / IE1003</strain>
        <plasmid>IncQ pIE723</plasmid>
    </source>
</reference>
<organism>
    <name type="scientific">Escherichia coli</name>
    <dbReference type="NCBI Taxonomy" id="562"/>
    <lineage>
        <taxon>Bacteria</taxon>
        <taxon>Pseudomonadati</taxon>
        <taxon>Pseudomonadota</taxon>
        <taxon>Gammaproteobacteria</taxon>
        <taxon>Enterobacterales</taxon>
        <taxon>Enterobacteriaceae</taxon>
        <taxon>Escherichia</taxon>
    </lineage>
</organism>
<evidence type="ECO:0000250" key="1">
    <source>
        <dbReference type="UniProtKB" id="P0AE05"/>
    </source>
</evidence>
<evidence type="ECO:0000305" key="2"/>
<proteinExistence type="inferred from homology"/>
<accession>P0AE04</accession>
<accession>P08880</accession>
<accession>P10019</accession>
<name>AADB_ECOLX</name>
<dbReference type="EC" id="2.7.7.46"/>
<dbReference type="EMBL" id="L06418">
    <property type="protein sequence ID" value="AAA92745.1"/>
    <property type="molecule type" value="Genomic_DNA"/>
</dbReference>
<dbReference type="EMBL" id="U14415">
    <property type="protein sequence ID" value="AAA85811.1"/>
    <property type="molecule type" value="Genomic_DNA"/>
</dbReference>
<dbReference type="EMBL" id="X04555">
    <property type="protein sequence ID" value="CAA28209.1"/>
    <property type="status" value="ALT_INIT"/>
    <property type="molecule type" value="Genomic_DNA"/>
</dbReference>
<dbReference type="EMBL" id="M86913">
    <property type="protein sequence ID" value="AAA72105.1"/>
    <property type="molecule type" value="Genomic_DNA"/>
</dbReference>
<dbReference type="EMBL" id="Z47410">
    <property type="protein sequence ID" value="CAA87463.1"/>
    <property type="molecule type" value="Genomic_DNA"/>
</dbReference>
<dbReference type="PIR" id="A25536">
    <property type="entry name" value="XNECAD"/>
</dbReference>
<dbReference type="RefSeq" id="WP_000381802.1">
    <property type="nucleotide sequence ID" value="NZ_WIOY01000079.1"/>
</dbReference>
<dbReference type="SMR" id="P0AE04"/>
<dbReference type="CARD" id="ARO:3000230">
    <property type="molecule name" value="ANT(2'')-Ia"/>
    <property type="mechanism identifier" value="ARO:0001004"/>
    <property type="mechanism name" value="antibiotic inactivation"/>
</dbReference>
<dbReference type="GeneID" id="97221509"/>
<dbReference type="KEGG" id="ag:CAA28209"/>
<dbReference type="GO" id="GO:0008871">
    <property type="term" value="F:aminoglycoside 2''-nucleotidyltransferase activity"/>
    <property type="evidence" value="ECO:0007669"/>
    <property type="project" value="UniProtKB-EC"/>
</dbReference>
<dbReference type="GO" id="GO:0046872">
    <property type="term" value="F:metal ion binding"/>
    <property type="evidence" value="ECO:0007669"/>
    <property type="project" value="UniProtKB-KW"/>
</dbReference>
<dbReference type="GO" id="GO:0046677">
    <property type="term" value="P:response to antibiotic"/>
    <property type="evidence" value="ECO:0007669"/>
    <property type="project" value="UniProtKB-KW"/>
</dbReference>
<dbReference type="Gene3D" id="3.30.460.40">
    <property type="match status" value="1"/>
</dbReference>
<dbReference type="InterPro" id="IPR019646">
    <property type="entry name" value="Aminoglyc_AdlTrfase"/>
</dbReference>
<dbReference type="NCBIfam" id="NF000064">
    <property type="entry name" value="ANT_2pp_Ia"/>
    <property type="match status" value="1"/>
</dbReference>
<dbReference type="Pfam" id="PF10706">
    <property type="entry name" value="Aminoglyc_resit"/>
    <property type="match status" value="1"/>
</dbReference>
<feature type="chain" id="PRO_0000068556" description="2''-aminoglycoside nucleotidyltransferase">
    <location>
        <begin position="1"/>
        <end position="177"/>
    </location>
</feature>
<feature type="active site" description="Proton acceptor" evidence="1">
    <location>
        <position position="86"/>
    </location>
</feature>
<feature type="binding site" evidence="1">
    <location>
        <position position="44"/>
    </location>
    <ligand>
        <name>Mg(2+)</name>
        <dbReference type="ChEBI" id="CHEBI:18420"/>
        <label>1</label>
    </ligand>
</feature>
<feature type="binding site" evidence="1">
    <location>
        <position position="44"/>
    </location>
    <ligand>
        <name>Mg(2+)</name>
        <dbReference type="ChEBI" id="CHEBI:18420"/>
        <label>2</label>
    </ligand>
</feature>
<feature type="binding site" evidence="1">
    <location>
        <position position="46"/>
    </location>
    <ligand>
        <name>Mg(2+)</name>
        <dbReference type="ChEBI" id="CHEBI:18420"/>
        <label>1</label>
    </ligand>
</feature>
<feature type="binding site" evidence="1">
    <location>
        <position position="46"/>
    </location>
    <ligand>
        <name>Mg(2+)</name>
        <dbReference type="ChEBI" id="CHEBI:18420"/>
        <label>2</label>
    </ligand>
</feature>
<feature type="binding site" evidence="1">
    <location>
        <position position="86"/>
    </location>
    <ligand>
        <name>Mg(2+)</name>
        <dbReference type="ChEBI" id="CHEBI:18420"/>
        <label>2</label>
    </ligand>
</feature>
<sequence>MDTTQVTLIHKILAAADERNLPLWIGGGWAIDARLGRVTRKHDDIDLTFPGERRGELEAIVEMLGGRVMEELDYGFLAEIGDELLDCEPAWWADEAYEIAEAPQGSCPEAAEGVIAGRPVRCNSWEAIIWDYFYYADEVPPVDWPTKHIESYRLACTSLGAEKVEVLRAAFRSRYAA</sequence>
<gene>
    <name type="primary">aadB</name>
</gene>
<keyword id="KW-0046">Antibiotic resistance</keyword>
<keyword id="KW-0460">Magnesium</keyword>
<keyword id="KW-0479">Metal-binding</keyword>
<keyword id="KW-0548">Nucleotidyltransferase</keyword>
<keyword id="KW-0614">Plasmid</keyword>
<keyword id="KW-0808">Transferase</keyword>
<keyword id="KW-0814">Transposable element</keyword>